<sequence length="409" mass="48963">MVPDDVEPMEVDDDGALIVDLNETVEEDEETKKEKKRRKRFREKLKRFDHYSQFSGISIAQIDWPLIQGRSLQRSPLTGQSFNADENIFRIDEWPRETFLQITSTLTFCAGAALLSNEKITLFVFQRTMKTLVAYCNFMYHRAITHNRRQINRIDVHELISRNPLRFHMFLQKFLPHPDINRTHFNNEFLYYFHNLYFQDETCRLLYHDVARYSPIINQQGTRMSLQHQIYYPDVMRNPAFDALWFTSFINPSGYSFSRFHAYRFHEALGMPPLESELIIVLDWLAKLIICDIGYKVLAWRDARGFQGLPDLLSFQMAMLEEGDPLFDLDIDYTAPPTRLFSEPTRFQTYPKFQPRRRIDFPSRFDGFYKKRRLERGLEEIQESFIMNHFPTKPLRTVYVYTHPEERRR</sequence>
<comment type="function">
    <text evidence="2">Required for male development. In XO (male) animals, fem-3 directs male differentiation in all tissues. In XX (hermaphrodite animals), it specifies the first 80 or so germ cells to be sperm. Negatively regulates male development when bound to tra-2.</text>
</comment>
<comment type="subunit">
    <text evidence="1 2">Component of a complex containing fem-1, fem-2 and fem-3 (By similarity). Interacts with fem-1 and fem-2 (via N-terminus) (By similarity). Part of a E3 ubiquitin-protein ligase complex, at least composed of cul-2, elc-1, tra-1, fem-1, fem-2 and fem-3; mediates the ubiquitination and subsequent proteasomal degradation of tra-1 (By similarity). Interacts with sel-10 (By similarity). Interacts with tra-2 (PubMed:12477393).</text>
</comment>
<organism>
    <name type="scientific">Caenorhabditis briggsae</name>
    <dbReference type="NCBI Taxonomy" id="6238"/>
    <lineage>
        <taxon>Eukaryota</taxon>
        <taxon>Metazoa</taxon>
        <taxon>Ecdysozoa</taxon>
        <taxon>Nematoda</taxon>
        <taxon>Chromadorea</taxon>
        <taxon>Rhabditida</taxon>
        <taxon>Rhabditina</taxon>
        <taxon>Rhabditomorpha</taxon>
        <taxon>Rhabditoidea</taxon>
        <taxon>Rhabditidae</taxon>
        <taxon>Peloderinae</taxon>
        <taxon>Caenorhabditis</taxon>
    </lineage>
</organism>
<keyword id="KW-0217">Developmental protein</keyword>
<keyword id="KW-0221">Differentiation</keyword>
<keyword id="KW-1185">Reference proteome</keyword>
<keyword id="KW-0726">Sexual differentiation</keyword>
<keyword id="KW-0744">Spermatogenesis</keyword>
<accession>Q8I8U6</accession>
<accession>A8Y0I5</accession>
<dbReference type="EMBL" id="AY143174">
    <property type="protein sequence ID" value="AAN37405.1"/>
    <property type="molecule type" value="mRNA"/>
</dbReference>
<dbReference type="EMBL" id="HE600966">
    <property type="protein sequence ID" value="CAP38403.1"/>
    <property type="molecule type" value="Genomic_DNA"/>
</dbReference>
<dbReference type="FunCoup" id="Q8I8U6">
    <property type="interactions" value="809"/>
</dbReference>
<dbReference type="IntAct" id="Q8I8U6">
    <property type="interactions" value="1"/>
</dbReference>
<dbReference type="STRING" id="6238.Q8I8U6"/>
<dbReference type="EnsemblMetazoa" id="CBG21774.1">
    <property type="protein sequence ID" value="CBG21774.1"/>
    <property type="gene ID" value="WBGene00000329"/>
</dbReference>
<dbReference type="KEGG" id="cbr:CBG_21774"/>
<dbReference type="CTD" id="8575004"/>
<dbReference type="WormBase" id="CBG21774">
    <property type="protein sequence ID" value="CBP11911"/>
    <property type="gene ID" value="WBGene00000329"/>
    <property type="gene designation" value="Cbr-fem-3"/>
</dbReference>
<dbReference type="eggNOG" id="ENOG502TI3W">
    <property type="taxonomic scope" value="Eukaryota"/>
</dbReference>
<dbReference type="HOGENOM" id="CLU_636523_0_0_1"/>
<dbReference type="InParanoid" id="Q8I8U6"/>
<dbReference type="OMA" id="FVFQRTM"/>
<dbReference type="Proteomes" id="UP000008549">
    <property type="component" value="Unassembled WGS sequence"/>
</dbReference>
<dbReference type="GO" id="GO:0031462">
    <property type="term" value="C:Cul2-RING ubiquitin ligase complex"/>
    <property type="evidence" value="ECO:0007669"/>
    <property type="project" value="EnsemblMetazoa"/>
</dbReference>
<dbReference type="GO" id="GO:0005737">
    <property type="term" value="C:cytoplasm"/>
    <property type="evidence" value="ECO:0007669"/>
    <property type="project" value="EnsemblMetazoa"/>
</dbReference>
<dbReference type="GO" id="GO:0008287">
    <property type="term" value="C:protein serine/threonine phosphatase complex"/>
    <property type="evidence" value="ECO:0007669"/>
    <property type="project" value="EnsemblMetazoa"/>
</dbReference>
<dbReference type="GO" id="GO:0019903">
    <property type="term" value="F:protein phosphatase binding"/>
    <property type="evidence" value="ECO:0007669"/>
    <property type="project" value="EnsemblMetazoa"/>
</dbReference>
<dbReference type="GO" id="GO:0030154">
    <property type="term" value="P:cell differentiation"/>
    <property type="evidence" value="ECO:0007669"/>
    <property type="project" value="UniProtKB-KW"/>
</dbReference>
<dbReference type="GO" id="GO:0019102">
    <property type="term" value="P:male somatic sex determination"/>
    <property type="evidence" value="ECO:0000315"/>
    <property type="project" value="UniProtKB"/>
</dbReference>
<dbReference type="GO" id="GO:0042006">
    <property type="term" value="P:masculinization of hermaphroditic germ-line"/>
    <property type="evidence" value="ECO:0007669"/>
    <property type="project" value="EnsemblMetazoa"/>
</dbReference>
<dbReference type="GO" id="GO:0010628">
    <property type="term" value="P:positive regulation of gene expression"/>
    <property type="evidence" value="ECO:0007669"/>
    <property type="project" value="EnsemblMetazoa"/>
</dbReference>
<dbReference type="GO" id="GO:1904146">
    <property type="term" value="P:positive regulation of meiotic cell cycle process involved in oocyte maturation"/>
    <property type="evidence" value="ECO:0007669"/>
    <property type="project" value="EnsemblMetazoa"/>
</dbReference>
<dbReference type="GO" id="GO:0060282">
    <property type="term" value="P:positive regulation of oocyte development"/>
    <property type="evidence" value="ECO:0007669"/>
    <property type="project" value="EnsemblMetazoa"/>
</dbReference>
<dbReference type="GO" id="GO:0071168">
    <property type="term" value="P:protein localization to chromatin"/>
    <property type="evidence" value="ECO:0007669"/>
    <property type="project" value="EnsemblMetazoa"/>
</dbReference>
<dbReference type="GO" id="GO:1905936">
    <property type="term" value="P:regulation of germ cell proliferation"/>
    <property type="evidence" value="ECO:0007669"/>
    <property type="project" value="EnsemblMetazoa"/>
</dbReference>
<dbReference type="GO" id="GO:0007548">
    <property type="term" value="P:sex differentiation"/>
    <property type="evidence" value="ECO:0007669"/>
    <property type="project" value="UniProtKB-KW"/>
</dbReference>
<dbReference type="GO" id="GO:0007283">
    <property type="term" value="P:spermatogenesis"/>
    <property type="evidence" value="ECO:0007669"/>
    <property type="project" value="UniProtKB-KW"/>
</dbReference>
<gene>
    <name evidence="4" type="primary">fem-3</name>
    <name type="ORF">CBG21774</name>
</gene>
<reference evidence="3 4" key="1">
    <citation type="journal article" date="2002" name="Curr. Biol.">
        <title>Rapid coevolution of the nematode sex-determining genes fem-3 and tra-2.</title>
        <authorList>
            <person name="Haag E.S."/>
            <person name="Wang S."/>
            <person name="Kimble J."/>
        </authorList>
    </citation>
    <scope>NUCLEOTIDE SEQUENCE [MRNA]</scope>
    <scope>FUNCTION</scope>
    <scope>INTERACTION WITH TRA-2</scope>
    <source>
        <strain evidence="4">AF16</strain>
    </source>
</reference>
<reference evidence="3" key="2">
    <citation type="journal article" date="2003" name="PLoS Biol.">
        <title>The genome sequence of Caenorhabditis briggsae: a platform for comparative genomics.</title>
        <authorList>
            <person name="Stein L.D."/>
            <person name="Bao Z."/>
            <person name="Blasiar D."/>
            <person name="Blumenthal T."/>
            <person name="Brent M.R."/>
            <person name="Chen N."/>
            <person name="Chinwalla A."/>
            <person name="Clarke L."/>
            <person name="Clee C."/>
            <person name="Coghlan A."/>
            <person name="Coulson A."/>
            <person name="D'Eustachio P."/>
            <person name="Fitch D.H.A."/>
            <person name="Fulton L.A."/>
            <person name="Fulton R.E."/>
            <person name="Griffiths-Jones S."/>
            <person name="Harris T.W."/>
            <person name="Hillier L.W."/>
            <person name="Kamath R."/>
            <person name="Kuwabara P.E."/>
            <person name="Mardis E.R."/>
            <person name="Marra M.A."/>
            <person name="Miner T.L."/>
            <person name="Minx P."/>
            <person name="Mullikin J.C."/>
            <person name="Plumb R.W."/>
            <person name="Rogers J."/>
            <person name="Schein J.E."/>
            <person name="Sohrmann M."/>
            <person name="Spieth J."/>
            <person name="Stajich J.E."/>
            <person name="Wei C."/>
            <person name="Willey D."/>
            <person name="Wilson R.K."/>
            <person name="Durbin R.M."/>
            <person name="Waterston R.H."/>
        </authorList>
    </citation>
    <scope>NUCLEOTIDE SEQUENCE [LARGE SCALE GENOMIC DNA]</scope>
    <source>
        <strain>AF16</strain>
    </source>
</reference>
<name>FEM3_CAEBR</name>
<feature type="chain" id="PRO_0000087219" description="Sex-determination protein fem-3">
    <location>
        <begin position="1"/>
        <end position="409"/>
    </location>
</feature>
<feature type="sequence conflict" description="In Ref. 1; AAN37405." evidence="3" ref="1">
    <original>K</original>
    <variation>R</variation>
    <location>
        <position position="33"/>
    </location>
</feature>
<protein>
    <recommendedName>
        <fullName>Sex-determination protein fem-3</fullName>
    </recommendedName>
    <alternativeName>
        <fullName>Cb-FEM-3</fullName>
    </alternativeName>
</protein>
<proteinExistence type="evidence at protein level"/>
<evidence type="ECO:0000250" key="1">
    <source>
        <dbReference type="UniProtKB" id="P34691"/>
    </source>
</evidence>
<evidence type="ECO:0000269" key="2">
    <source>
    </source>
</evidence>
<evidence type="ECO:0000305" key="3"/>
<evidence type="ECO:0000312" key="4">
    <source>
        <dbReference type="EMBL" id="AAN37405.1"/>
    </source>
</evidence>